<protein>
    <recommendedName>
        <fullName evidence="1">Small ribosomal subunit protein uS10</fullName>
    </recommendedName>
    <alternativeName>
        <fullName evidence="2">30S ribosomal protein S10</fullName>
    </alternativeName>
</protein>
<feature type="chain" id="PRO_1000127167" description="Small ribosomal subunit protein uS10">
    <location>
        <begin position="1"/>
        <end position="103"/>
    </location>
</feature>
<accession>B4F1I3</accession>
<gene>
    <name evidence="1" type="primary">rpsJ</name>
    <name type="ordered locus">PMI3254</name>
</gene>
<keyword id="KW-1185">Reference proteome</keyword>
<keyword id="KW-0687">Ribonucleoprotein</keyword>
<keyword id="KW-0689">Ribosomal protein</keyword>
<comment type="function">
    <text evidence="1">Involved in the binding of tRNA to the ribosomes.</text>
</comment>
<comment type="subunit">
    <text evidence="1">Part of the 30S ribosomal subunit.</text>
</comment>
<comment type="similarity">
    <text evidence="1">Belongs to the universal ribosomal protein uS10 family.</text>
</comment>
<proteinExistence type="inferred from homology"/>
<evidence type="ECO:0000255" key="1">
    <source>
        <dbReference type="HAMAP-Rule" id="MF_00508"/>
    </source>
</evidence>
<evidence type="ECO:0000305" key="2"/>
<reference key="1">
    <citation type="journal article" date="2008" name="J. Bacteriol.">
        <title>Complete genome sequence of uropathogenic Proteus mirabilis, a master of both adherence and motility.</title>
        <authorList>
            <person name="Pearson M.M."/>
            <person name="Sebaihia M."/>
            <person name="Churcher C."/>
            <person name="Quail M.A."/>
            <person name="Seshasayee A.S."/>
            <person name="Luscombe N.M."/>
            <person name="Abdellah Z."/>
            <person name="Arrosmith C."/>
            <person name="Atkin B."/>
            <person name="Chillingworth T."/>
            <person name="Hauser H."/>
            <person name="Jagels K."/>
            <person name="Moule S."/>
            <person name="Mungall K."/>
            <person name="Norbertczak H."/>
            <person name="Rabbinowitsch E."/>
            <person name="Walker D."/>
            <person name="Whithead S."/>
            <person name="Thomson N.R."/>
            <person name="Rather P.N."/>
            <person name="Parkhill J."/>
            <person name="Mobley H.L.T."/>
        </authorList>
    </citation>
    <scope>NUCLEOTIDE SEQUENCE [LARGE SCALE GENOMIC DNA]</scope>
    <source>
        <strain>HI4320</strain>
    </source>
</reference>
<dbReference type="EMBL" id="AM942759">
    <property type="protein sequence ID" value="CAR46378.1"/>
    <property type="molecule type" value="Genomic_DNA"/>
</dbReference>
<dbReference type="RefSeq" id="WP_001181005.1">
    <property type="nucleotide sequence ID" value="NC_010554.1"/>
</dbReference>
<dbReference type="SMR" id="B4F1I3"/>
<dbReference type="EnsemblBacteria" id="CAR46378">
    <property type="protein sequence ID" value="CAR46378"/>
    <property type="gene ID" value="PMI3254"/>
</dbReference>
<dbReference type="GeneID" id="98390443"/>
<dbReference type="KEGG" id="pmr:PMI3254"/>
<dbReference type="eggNOG" id="COG0051">
    <property type="taxonomic scope" value="Bacteria"/>
</dbReference>
<dbReference type="HOGENOM" id="CLU_122625_1_3_6"/>
<dbReference type="Proteomes" id="UP000008319">
    <property type="component" value="Chromosome"/>
</dbReference>
<dbReference type="GO" id="GO:1990904">
    <property type="term" value="C:ribonucleoprotein complex"/>
    <property type="evidence" value="ECO:0007669"/>
    <property type="project" value="UniProtKB-KW"/>
</dbReference>
<dbReference type="GO" id="GO:0005840">
    <property type="term" value="C:ribosome"/>
    <property type="evidence" value="ECO:0007669"/>
    <property type="project" value="UniProtKB-KW"/>
</dbReference>
<dbReference type="GO" id="GO:0003735">
    <property type="term" value="F:structural constituent of ribosome"/>
    <property type="evidence" value="ECO:0007669"/>
    <property type="project" value="InterPro"/>
</dbReference>
<dbReference type="GO" id="GO:0000049">
    <property type="term" value="F:tRNA binding"/>
    <property type="evidence" value="ECO:0007669"/>
    <property type="project" value="UniProtKB-UniRule"/>
</dbReference>
<dbReference type="GO" id="GO:0006412">
    <property type="term" value="P:translation"/>
    <property type="evidence" value="ECO:0007669"/>
    <property type="project" value="UniProtKB-UniRule"/>
</dbReference>
<dbReference type="FunFam" id="3.30.70.600:FF:000001">
    <property type="entry name" value="30S ribosomal protein S10"/>
    <property type="match status" value="1"/>
</dbReference>
<dbReference type="Gene3D" id="3.30.70.600">
    <property type="entry name" value="Ribosomal protein S10 domain"/>
    <property type="match status" value="1"/>
</dbReference>
<dbReference type="HAMAP" id="MF_00508">
    <property type="entry name" value="Ribosomal_uS10"/>
    <property type="match status" value="1"/>
</dbReference>
<dbReference type="InterPro" id="IPR001848">
    <property type="entry name" value="Ribosomal_uS10"/>
</dbReference>
<dbReference type="InterPro" id="IPR018268">
    <property type="entry name" value="Ribosomal_uS10_CS"/>
</dbReference>
<dbReference type="InterPro" id="IPR027486">
    <property type="entry name" value="Ribosomal_uS10_dom"/>
</dbReference>
<dbReference type="InterPro" id="IPR036838">
    <property type="entry name" value="Ribosomal_uS10_dom_sf"/>
</dbReference>
<dbReference type="NCBIfam" id="NF001861">
    <property type="entry name" value="PRK00596.1"/>
    <property type="match status" value="1"/>
</dbReference>
<dbReference type="NCBIfam" id="TIGR01049">
    <property type="entry name" value="rpsJ_bact"/>
    <property type="match status" value="1"/>
</dbReference>
<dbReference type="PANTHER" id="PTHR11700">
    <property type="entry name" value="30S RIBOSOMAL PROTEIN S10 FAMILY MEMBER"/>
    <property type="match status" value="1"/>
</dbReference>
<dbReference type="Pfam" id="PF00338">
    <property type="entry name" value="Ribosomal_S10"/>
    <property type="match status" value="1"/>
</dbReference>
<dbReference type="PRINTS" id="PR00971">
    <property type="entry name" value="RIBOSOMALS10"/>
</dbReference>
<dbReference type="SMART" id="SM01403">
    <property type="entry name" value="Ribosomal_S10"/>
    <property type="match status" value="1"/>
</dbReference>
<dbReference type="SUPFAM" id="SSF54999">
    <property type="entry name" value="Ribosomal protein S10"/>
    <property type="match status" value="1"/>
</dbReference>
<dbReference type="PROSITE" id="PS00361">
    <property type="entry name" value="RIBOSOMAL_S10"/>
    <property type="match status" value="1"/>
</dbReference>
<sequence>MQNQRIRIRLKAFDHRLIDQSTAEIVETAKRTGAQVRGPIPLPTRKERFTVLISPHVNKDARDQYEIRTHKRLVDIVEPTEKTVDALMRLDLAAGVDVQISLG</sequence>
<organism>
    <name type="scientific">Proteus mirabilis (strain HI4320)</name>
    <dbReference type="NCBI Taxonomy" id="529507"/>
    <lineage>
        <taxon>Bacteria</taxon>
        <taxon>Pseudomonadati</taxon>
        <taxon>Pseudomonadota</taxon>
        <taxon>Gammaproteobacteria</taxon>
        <taxon>Enterobacterales</taxon>
        <taxon>Morganellaceae</taxon>
        <taxon>Proteus</taxon>
    </lineage>
</organism>
<name>RS10_PROMH</name>